<organism>
    <name type="scientific">Saccharopolyspora erythraea (strain ATCC 11635 / DSM 40517 / JCM 4748 / NBRC 13426 / NCIMB 8594 / NRRL 2338)</name>
    <dbReference type="NCBI Taxonomy" id="405948"/>
    <lineage>
        <taxon>Bacteria</taxon>
        <taxon>Bacillati</taxon>
        <taxon>Actinomycetota</taxon>
        <taxon>Actinomycetes</taxon>
        <taxon>Pseudonocardiales</taxon>
        <taxon>Pseudonocardiaceae</taxon>
        <taxon>Saccharopolyspora</taxon>
    </lineage>
</organism>
<comment type="function">
    <text evidence="4 5">Responsible for the C-12 hydroxylation of the macrolactone ring of erythromycin. Thus, EryK catalyzes the hydroxylation of erythromycin D (ErD) at the C-12 position to produce erythromycin C (ErC). Erythromycin B (ErB) is not a substrate for this enzyme.</text>
</comment>
<comment type="catalytic activity">
    <reaction evidence="4">
        <text>erythromycin D + NADPH + O2 + H(+) = erythromycin C + NADP(+) + H2O</text>
        <dbReference type="Rhea" id="RHEA:32631"/>
        <dbReference type="ChEBI" id="CHEBI:15377"/>
        <dbReference type="ChEBI" id="CHEBI:15378"/>
        <dbReference type="ChEBI" id="CHEBI:15379"/>
        <dbReference type="ChEBI" id="CHEBI:57783"/>
        <dbReference type="ChEBI" id="CHEBI:58349"/>
        <dbReference type="ChEBI" id="CHEBI:63677"/>
        <dbReference type="ChEBI" id="CHEBI:64258"/>
        <dbReference type="EC" id="1.14.13.154"/>
    </reaction>
</comment>
<comment type="cofactor">
    <cofactor evidence="2 3 4">
        <name>heme b</name>
        <dbReference type="ChEBI" id="CHEBI:60344"/>
    </cofactor>
    <text evidence="2 3 4">Binds 1 heme b (iron(II)-protoporphyrin IX) group per subunit.</text>
</comment>
<comment type="biophysicochemical properties">
    <kinetics>
        <KM evidence="4">8 uM for erythromycin D</KM>
        <text>kcat is 108 min(-1).</text>
    </kinetics>
</comment>
<comment type="pathway">
    <text evidence="4">Antibiotic biosynthesis; erythromycin biosynthesis.</text>
</comment>
<comment type="subunit">
    <text evidence="2 4">Monomer.</text>
</comment>
<comment type="disruption phenotype">
    <text evidence="5">Cells lacking this gene no longer produce erythromycin A but accumulate the B and D forms of the antibiotic.</text>
</comment>
<comment type="similarity">
    <text evidence="6">Belongs to the cytochrome P450 family.</text>
</comment>
<name>ERYK_SACEN</name>
<evidence type="ECO:0000256" key="1">
    <source>
        <dbReference type="SAM" id="MobiDB-lite"/>
    </source>
</evidence>
<evidence type="ECO:0000269" key="2">
    <source>
    </source>
</evidence>
<evidence type="ECO:0000269" key="3">
    <source>
    </source>
</evidence>
<evidence type="ECO:0000269" key="4">
    <source>
    </source>
</evidence>
<evidence type="ECO:0000269" key="5">
    <source>
    </source>
</evidence>
<evidence type="ECO:0000305" key="6"/>
<evidence type="ECO:0007829" key="7">
    <source>
        <dbReference type="PDB" id="2JJN"/>
    </source>
</evidence>
<evidence type="ECO:0007829" key="8">
    <source>
        <dbReference type="PDB" id="2JJO"/>
    </source>
</evidence>
<evidence type="ECO:0007829" key="9">
    <source>
        <dbReference type="PDB" id="2WIO"/>
    </source>
</evidence>
<evidence type="ECO:0007829" key="10">
    <source>
        <dbReference type="PDB" id="2XFH"/>
    </source>
</evidence>
<protein>
    <recommendedName>
        <fullName>Erythromycin C-12 hydroxylase</fullName>
        <ecNumber>1.14.13.154</ecNumber>
    </recommendedName>
    <alternativeName>
        <fullName>Cytochrome P450 113A1</fullName>
        <shortName>CYP113A1</shortName>
    </alternativeName>
    <alternativeName>
        <fullName>Erythromycin D C-12 hydroxylase</fullName>
    </alternativeName>
</protein>
<reference key="1">
    <citation type="journal article" date="1993" name="J. Bacteriol.">
        <title>Identification of a Saccharopolyspora erythraea gene required for the final hydroxylation step in erythromycin biosynthesis.</title>
        <authorList>
            <person name="Stassi D."/>
            <person name="Donadio S."/>
            <person name="Staver M.J."/>
            <person name="Katz L."/>
        </authorList>
    </citation>
    <scope>NUCLEOTIDE SEQUENCE [GENOMIC DNA]</scope>
    <scope>FUNCTION IN ERYTHROMYCIN BIOSYNTHESIS</scope>
    <scope>DISRUPTION PHENOTYPE</scope>
    <source>
        <strain>ATCC 11635 / DSM 40517 / JCM 4748 / NBRC 13426 / NCIMB 8594 / NRRL 2338</strain>
    </source>
</reference>
<reference key="2">
    <citation type="journal article" date="1997" name="Gene">
        <title>Nucleotide sequence of the ermE distal flank of the erythromycin biosynthesis cluster in Saccharopolyspora erythraea.</title>
        <authorList>
            <person name="Pereda A."/>
            <person name="Summers R."/>
            <person name="Katz L."/>
        </authorList>
    </citation>
    <scope>SEQUENCE REVISION</scope>
    <source>
        <strain>ATCC 11635 / DSM 40517 / JCM 4748 / NBRC 13426 / NCIMB 8594 / NRRL 2338</strain>
    </source>
</reference>
<reference key="3">
    <citation type="journal article" date="2007" name="Nat. Biotechnol.">
        <title>Complete genome sequence of the erythromycin-producing bacterium Saccharopolyspora erythraea NRRL23338.</title>
        <authorList>
            <person name="Oliynyk M."/>
            <person name="Samborskyy M."/>
            <person name="Lester J.B."/>
            <person name="Mironenko T."/>
            <person name="Scott N."/>
            <person name="Dickens S."/>
            <person name="Haydock S.F."/>
            <person name="Leadlay P.F."/>
        </authorList>
    </citation>
    <scope>NUCLEOTIDE SEQUENCE [LARGE SCALE GENOMIC DNA]</scope>
    <source>
        <strain>ATCC 11635 / DSM 40517 / JCM 4748 / NBRC 13426 / NCIMB 8594 / NRRL 2338</strain>
    </source>
</reference>
<reference key="4">
    <citation type="journal article" date="1995" name="Biochemistry">
        <title>Overproduction and characterization of the erythromycin C-12 hydroxylase, EryK.</title>
        <authorList>
            <person name="Lambalot R.H."/>
            <person name="Cane D.E."/>
            <person name="Aparicio J.J."/>
            <person name="Katz L."/>
        </authorList>
    </citation>
    <scope>FUNCTION</scope>
    <scope>CATALYTIC ACTIVITY</scope>
    <scope>COFACTOR</scope>
    <scope>SUBSTRATE SPECIFICITY</scope>
    <scope>KINETIC PARAMETERS</scope>
    <scope>PATHWAY</scope>
    <scope>SUBUNIT</scope>
    <source>
        <strain>ATCC 11635 / DSM 40517 / JCM 4748 / NBRC 13426 / NCIMB 8594 / NRRL 2338</strain>
    </source>
</reference>
<reference key="5">
    <citation type="journal article" date="2008" name="Protein Pept. Lett.">
        <title>Cloning, expression, purification, crystallization and preliminary X-ray crystallographic analysis of C-12 hydroxylase EryK from Saccharopolyspora erythraea.</title>
        <authorList>
            <person name="Savino C."/>
            <person name="Sciara G."/>
            <person name="Miele A.E."/>
            <person name="Kendrew S.G."/>
            <person name="Vallone B."/>
        </authorList>
    </citation>
    <scope>CRYSTALLIZATION</scope>
</reference>
<reference key="6">
    <citation type="journal article" date="2009" name="J. Biol. Chem.">
        <title>Investigating the structural plasticity of a cytochrome P450: three-dimensional structures of P450 EryK and binding to its physiological substrate.</title>
        <authorList>
            <person name="Savino C."/>
            <person name="Montemiglio L.C."/>
            <person name="Sciara G."/>
            <person name="Miele A.E."/>
            <person name="Kendrew S.G."/>
            <person name="Jemth P."/>
            <person name="Gianni S."/>
            <person name="Vallone B."/>
        </authorList>
    </citation>
    <scope>X-RAY CRYSTALLOGRAPHY (1.59 ANGSTROMS) OF 2-397 IN COMPLEXES WITH HEME AND ERYTHROMYCIN D</scope>
    <scope>COFACTOR</scope>
    <scope>SUBUNIT</scope>
</reference>
<reference key="7">
    <citation type="journal article" date="2010" name="Biochemistry">
        <title>Azole drugs trap cytochrome P450 EryK in alternative conformational states.</title>
        <authorList>
            <person name="Montemiglio L.C."/>
            <person name="Gianni S."/>
            <person name="Vallone B."/>
            <person name="Savino C."/>
        </authorList>
    </citation>
    <scope>X-RAY CRYSTALLOGRAPHY (1.90 ANGSTROMS) OF 2-397 IN COMPLEXES WITH HEME AND THE INHIBITORS KETOCONAZOLE AND CLOTRIMAZOLE</scope>
    <scope>COFACTOR</scope>
</reference>
<accession>P48635</accession>
<accession>A4F7N0</accession>
<accession>O33990</accession>
<gene>
    <name type="primary">eryK</name>
    <name type="synonym">CYP113A1</name>
    <name type="ordered locus">SACE_0713</name>
</gene>
<feature type="chain" id="PRO_0000052229" description="Erythromycin C-12 hydroxylase">
    <location>
        <begin position="1"/>
        <end position="397"/>
    </location>
</feature>
<feature type="region of interest" description="Disordered" evidence="1">
    <location>
        <begin position="307"/>
        <end position="326"/>
    </location>
</feature>
<feature type="compositionally biased region" description="Basic and acidic residues" evidence="1">
    <location>
        <begin position="307"/>
        <end position="322"/>
    </location>
</feature>
<feature type="binding site">
    <location>
        <begin position="74"/>
        <end position="75"/>
    </location>
    <ligand>
        <name>substrate</name>
    </ligand>
</feature>
<feature type="binding site">
    <location>
        <position position="81"/>
    </location>
    <ligand>
        <name>heme</name>
        <dbReference type="ChEBI" id="CHEBI:30413"/>
    </ligand>
</feature>
<feature type="binding site">
    <location>
        <position position="85"/>
    </location>
    <ligand>
        <name>heme</name>
        <dbReference type="ChEBI" id="CHEBI:30413"/>
    </ligand>
</feature>
<feature type="binding site">
    <location>
        <position position="278"/>
    </location>
    <ligand>
        <name>substrate</name>
    </ligand>
</feature>
<feature type="binding site">
    <location>
        <position position="279"/>
    </location>
    <ligand>
        <name>heme</name>
        <dbReference type="ChEBI" id="CHEBI:30413"/>
    </ligand>
</feature>
<feature type="binding site">
    <location>
        <position position="337"/>
    </location>
    <ligand>
        <name>heme</name>
        <dbReference type="ChEBI" id="CHEBI:30413"/>
    </ligand>
</feature>
<feature type="binding site" description="axial binding residue">
    <location>
        <position position="339"/>
    </location>
    <ligand>
        <name>heme</name>
        <dbReference type="ChEBI" id="CHEBI:30413"/>
    </ligand>
    <ligandPart>
        <name>Fe</name>
        <dbReference type="ChEBI" id="CHEBI:18248"/>
    </ligandPart>
</feature>
<feature type="sequence conflict" description="In Ref. 1 and 2; AAC45584." evidence="6" ref="1 2">
    <original>L</original>
    <variation>F</variation>
    <location>
        <position position="330"/>
    </location>
</feature>
<feature type="strand" evidence="9">
    <location>
        <begin position="10"/>
        <end position="12"/>
    </location>
</feature>
<feature type="helix" evidence="7">
    <location>
        <begin position="13"/>
        <end position="26"/>
    </location>
</feature>
<feature type="strand" evidence="7">
    <location>
        <begin position="28"/>
        <end position="31"/>
    </location>
</feature>
<feature type="strand" evidence="7">
    <location>
        <begin position="37"/>
        <end position="39"/>
    </location>
</feature>
<feature type="helix" evidence="7">
    <location>
        <begin position="42"/>
        <end position="50"/>
    </location>
</feature>
<feature type="turn" evidence="7">
    <location>
        <begin position="52"/>
        <end position="54"/>
    </location>
</feature>
<feature type="strand" evidence="7">
    <location>
        <begin position="55"/>
        <end position="57"/>
    </location>
</feature>
<feature type="helix" evidence="7">
    <location>
        <begin position="59"/>
        <end position="62"/>
    </location>
</feature>
<feature type="helix" evidence="7">
    <location>
        <begin position="73"/>
        <end position="75"/>
    </location>
</feature>
<feature type="helix" evidence="7">
    <location>
        <begin position="80"/>
        <end position="91"/>
    </location>
</feature>
<feature type="helix" evidence="7">
    <location>
        <begin position="94"/>
        <end position="98"/>
    </location>
</feature>
<feature type="helix" evidence="7">
    <location>
        <begin position="101"/>
        <end position="113"/>
    </location>
</feature>
<feature type="strand" evidence="7">
    <location>
        <begin position="117"/>
        <end position="120"/>
    </location>
</feature>
<feature type="helix" evidence="7">
    <location>
        <begin position="121"/>
        <end position="124"/>
    </location>
</feature>
<feature type="turn" evidence="7">
    <location>
        <begin position="125"/>
        <end position="127"/>
    </location>
</feature>
<feature type="helix" evidence="7">
    <location>
        <begin position="128"/>
        <end position="138"/>
    </location>
</feature>
<feature type="helix" evidence="10">
    <location>
        <begin position="142"/>
        <end position="144"/>
    </location>
</feature>
<feature type="helix" evidence="7">
    <location>
        <begin position="151"/>
        <end position="157"/>
    </location>
</feature>
<feature type="helix" evidence="7">
    <location>
        <begin position="166"/>
        <end position="192"/>
    </location>
</feature>
<feature type="helix" evidence="7">
    <location>
        <begin position="198"/>
        <end position="204"/>
    </location>
</feature>
<feature type="strand" evidence="9">
    <location>
        <begin position="207"/>
        <end position="209"/>
    </location>
</feature>
<feature type="helix" evidence="7">
    <location>
        <begin position="214"/>
        <end position="245"/>
    </location>
</feature>
<feature type="helix" evidence="7">
    <location>
        <begin position="248"/>
        <end position="255"/>
    </location>
</feature>
<feature type="helix" evidence="7">
    <location>
        <begin position="257"/>
        <end position="259"/>
    </location>
</feature>
<feature type="helix" evidence="7">
    <location>
        <begin position="260"/>
        <end position="270"/>
    </location>
</feature>
<feature type="strand" evidence="7">
    <location>
        <begin position="276"/>
        <end position="283"/>
    </location>
</feature>
<feature type="strand" evidence="7">
    <location>
        <begin position="285"/>
        <end position="287"/>
    </location>
</feature>
<feature type="strand" evidence="7">
    <location>
        <begin position="290"/>
        <end position="292"/>
    </location>
</feature>
<feature type="strand" evidence="7">
    <location>
        <begin position="297"/>
        <end position="301"/>
    </location>
</feature>
<feature type="helix" evidence="7">
    <location>
        <begin position="302"/>
        <end position="306"/>
    </location>
</feature>
<feature type="turn" evidence="7">
    <location>
        <begin position="309"/>
        <end position="311"/>
    </location>
</feature>
<feature type="strand" evidence="7">
    <location>
        <begin position="312"/>
        <end position="314"/>
    </location>
</feature>
<feature type="helix" evidence="10">
    <location>
        <begin position="326"/>
        <end position="328"/>
    </location>
</feature>
<feature type="helix" evidence="7">
    <location>
        <begin position="330"/>
        <end position="332"/>
    </location>
</feature>
<feature type="helix" evidence="7">
    <location>
        <begin position="342"/>
        <end position="360"/>
    </location>
</feature>
<feature type="strand" evidence="8">
    <location>
        <begin position="363"/>
        <end position="365"/>
    </location>
</feature>
<feature type="strand" evidence="7">
    <location>
        <begin position="377"/>
        <end position="383"/>
    </location>
</feature>
<feature type="strand" evidence="7">
    <location>
        <begin position="386"/>
        <end position="388"/>
    </location>
</feature>
<dbReference type="EC" id="1.14.13.154"/>
<dbReference type="EMBL" id="U82823">
    <property type="protein sequence ID" value="AAC45584.1"/>
    <property type="molecule type" value="Genomic_DNA"/>
</dbReference>
<dbReference type="EMBL" id="AM420293">
    <property type="protein sequence ID" value="CAM00054.1"/>
    <property type="molecule type" value="Genomic_DNA"/>
</dbReference>
<dbReference type="PIR" id="B40634">
    <property type="entry name" value="B40634"/>
</dbReference>
<dbReference type="RefSeq" id="WP_009950895.1">
    <property type="nucleotide sequence ID" value="NC_009142.1"/>
</dbReference>
<dbReference type="PDB" id="2JJN">
    <property type="method" value="X-ray"/>
    <property type="resolution" value="1.59 A"/>
    <property type="chains" value="A=1-397"/>
</dbReference>
<dbReference type="PDB" id="2JJO">
    <property type="method" value="X-ray"/>
    <property type="resolution" value="1.99 A"/>
    <property type="chains" value="A=1-397"/>
</dbReference>
<dbReference type="PDB" id="2JJP">
    <property type="method" value="X-ray"/>
    <property type="resolution" value="2.10 A"/>
    <property type="chains" value="A=1-397"/>
</dbReference>
<dbReference type="PDB" id="2WIO">
    <property type="method" value="X-ray"/>
    <property type="resolution" value="2.00 A"/>
    <property type="chains" value="A=2-397"/>
</dbReference>
<dbReference type="PDB" id="2XFH">
    <property type="method" value="X-ray"/>
    <property type="resolution" value="1.90 A"/>
    <property type="chains" value="A=2-397"/>
</dbReference>
<dbReference type="PDB" id="3ZKP">
    <property type="method" value="X-ray"/>
    <property type="resolution" value="2.00 A"/>
    <property type="chains" value="A=2-397"/>
</dbReference>
<dbReference type="PDBsum" id="2JJN"/>
<dbReference type="PDBsum" id="2JJO"/>
<dbReference type="PDBsum" id="2JJP"/>
<dbReference type="PDBsum" id="2WIO"/>
<dbReference type="PDBsum" id="2XFH"/>
<dbReference type="PDBsum" id="3ZKP"/>
<dbReference type="SMR" id="P48635"/>
<dbReference type="STRING" id="405948.SACE_0713"/>
<dbReference type="KEGG" id="sen:SACE_0713"/>
<dbReference type="eggNOG" id="COG2124">
    <property type="taxonomic scope" value="Bacteria"/>
</dbReference>
<dbReference type="HOGENOM" id="CLU_033716_0_2_11"/>
<dbReference type="OrthoDB" id="502624at2"/>
<dbReference type="BioCyc" id="MetaCyc:MONOMER-17062"/>
<dbReference type="BRENDA" id="1.14.13.154">
    <property type="organism ID" value="5518"/>
</dbReference>
<dbReference type="BRENDA" id="1.14.15.33">
    <property type="organism ID" value="5518"/>
</dbReference>
<dbReference type="UniPathway" id="UPA00240"/>
<dbReference type="EvolutionaryTrace" id="P48635"/>
<dbReference type="Proteomes" id="UP000006728">
    <property type="component" value="Chromosome"/>
</dbReference>
<dbReference type="GO" id="GO:0020037">
    <property type="term" value="F:heme binding"/>
    <property type="evidence" value="ECO:0000314"/>
    <property type="project" value="UniProtKB"/>
</dbReference>
<dbReference type="GO" id="GO:0005506">
    <property type="term" value="F:iron ion binding"/>
    <property type="evidence" value="ECO:0007669"/>
    <property type="project" value="InterPro"/>
</dbReference>
<dbReference type="GO" id="GO:0004497">
    <property type="term" value="F:monooxygenase activity"/>
    <property type="evidence" value="ECO:0000315"/>
    <property type="project" value="UniProtKB"/>
</dbReference>
<dbReference type="GO" id="GO:0050661">
    <property type="term" value="F:NADP binding"/>
    <property type="evidence" value="ECO:0000314"/>
    <property type="project" value="UniProtKB"/>
</dbReference>
<dbReference type="GO" id="GO:0016709">
    <property type="term" value="F:oxidoreductase activity, acting on paired donors, with incorporation or reduction of molecular oxygen, NAD(P)H as one donor, and incorporation of one atom of oxygen"/>
    <property type="evidence" value="ECO:0000314"/>
    <property type="project" value="UniProtKB"/>
</dbReference>
<dbReference type="GO" id="GO:0033068">
    <property type="term" value="P:macrolide biosynthetic process"/>
    <property type="evidence" value="ECO:0000314"/>
    <property type="project" value="UniProtKB"/>
</dbReference>
<dbReference type="CDD" id="cd11032">
    <property type="entry name" value="P450_EryK-like"/>
    <property type="match status" value="1"/>
</dbReference>
<dbReference type="FunFam" id="1.10.630.10:FF:000273">
    <property type="entry name" value="Erythromycin C-12 hydroxylase"/>
    <property type="match status" value="1"/>
</dbReference>
<dbReference type="Gene3D" id="1.10.630.10">
    <property type="entry name" value="Cytochrome P450"/>
    <property type="match status" value="1"/>
</dbReference>
<dbReference type="InterPro" id="IPR001128">
    <property type="entry name" value="Cyt_P450"/>
</dbReference>
<dbReference type="InterPro" id="IPR002397">
    <property type="entry name" value="Cyt_P450_B"/>
</dbReference>
<dbReference type="InterPro" id="IPR017972">
    <property type="entry name" value="Cyt_P450_CS"/>
</dbReference>
<dbReference type="InterPro" id="IPR036396">
    <property type="entry name" value="Cyt_P450_sf"/>
</dbReference>
<dbReference type="PANTHER" id="PTHR46696:SF1">
    <property type="entry name" value="CYTOCHROME P450 YJIB-RELATED"/>
    <property type="match status" value="1"/>
</dbReference>
<dbReference type="PANTHER" id="PTHR46696">
    <property type="entry name" value="P450, PUTATIVE (EUROFUNG)-RELATED"/>
    <property type="match status" value="1"/>
</dbReference>
<dbReference type="Pfam" id="PF00067">
    <property type="entry name" value="p450"/>
    <property type="match status" value="1"/>
</dbReference>
<dbReference type="PRINTS" id="PR00359">
    <property type="entry name" value="BP450"/>
</dbReference>
<dbReference type="SUPFAM" id="SSF48264">
    <property type="entry name" value="Cytochrome P450"/>
    <property type="match status" value="1"/>
</dbReference>
<dbReference type="PROSITE" id="PS00086">
    <property type="entry name" value="CYTOCHROME_P450"/>
    <property type="match status" value="1"/>
</dbReference>
<proteinExistence type="evidence at protein level"/>
<keyword id="KW-0002">3D-structure</keyword>
<keyword id="KW-0045">Antibiotic biosynthesis</keyword>
<keyword id="KW-0349">Heme</keyword>
<keyword id="KW-0408">Iron</keyword>
<keyword id="KW-0479">Metal-binding</keyword>
<keyword id="KW-0503">Monooxygenase</keyword>
<keyword id="KW-0521">NADP</keyword>
<keyword id="KW-0560">Oxidoreductase</keyword>
<keyword id="KW-1185">Reference proteome</keyword>
<sequence>MTTIDEVPGMADETALLDWLGTMREKQPVWQDRYGVWHVFRHADVQTVLRDTATFSSDPTRVIEGASPTPGMIHEIDPPEHRALRKVVSSAFTPRTISDLEPRIRDVTRSLLADAGESFDLVDVLAFPLPVTIVAELLGLPPMDHEQFGDWSGALVDIQMDDPTDPALAERIADVLNPLTAYLKARCAERRADPGDDLISRLVLAEVDGRALDDEEAANFSTALLLAGHITTTVLLGNIVRTLDEHPAHWDAAAEDPGRIPAIVEEVLRYRPPFPQMQRTTTKATEVAGVPIPADVMVNTWVLSANRDSDAHDDPDRFDPSRKSGGAAQLSFGHGVHFCLGAPLARLENRVALEEIIARFGRLTVDRDDERLRHFEQIVLGTRHLPVLAGSSPRQSA</sequence>